<accession>Q9RDL7</accession>
<organism>
    <name type="scientific">Streptomyces coelicolor (strain ATCC BAA-471 / A3(2) / M145)</name>
    <dbReference type="NCBI Taxonomy" id="100226"/>
    <lineage>
        <taxon>Bacteria</taxon>
        <taxon>Bacillati</taxon>
        <taxon>Actinomycetota</taxon>
        <taxon>Actinomycetes</taxon>
        <taxon>Kitasatosporales</taxon>
        <taxon>Streptomycetaceae</taxon>
        <taxon>Streptomyces</taxon>
        <taxon>Streptomyces albidoflavus group</taxon>
    </lineage>
</organism>
<name>Y2569_STRCO</name>
<reference key="1">
    <citation type="journal article" date="2002" name="Nature">
        <title>Complete genome sequence of the model actinomycete Streptomyces coelicolor A3(2).</title>
        <authorList>
            <person name="Bentley S.D."/>
            <person name="Chater K.F."/>
            <person name="Cerdeno-Tarraga A.-M."/>
            <person name="Challis G.L."/>
            <person name="Thomson N.R."/>
            <person name="James K.D."/>
            <person name="Harris D.E."/>
            <person name="Quail M.A."/>
            <person name="Kieser H."/>
            <person name="Harper D."/>
            <person name="Bateman A."/>
            <person name="Brown S."/>
            <person name="Chandra G."/>
            <person name="Chen C.W."/>
            <person name="Collins M."/>
            <person name="Cronin A."/>
            <person name="Fraser A."/>
            <person name="Goble A."/>
            <person name="Hidalgo J."/>
            <person name="Hornsby T."/>
            <person name="Howarth S."/>
            <person name="Huang C.-H."/>
            <person name="Kieser T."/>
            <person name="Larke L."/>
            <person name="Murphy L.D."/>
            <person name="Oliver K."/>
            <person name="O'Neil S."/>
            <person name="Rabbinowitsch E."/>
            <person name="Rajandream M.A."/>
            <person name="Rutherford K.M."/>
            <person name="Rutter S."/>
            <person name="Seeger K."/>
            <person name="Saunders D."/>
            <person name="Sharp S."/>
            <person name="Squares R."/>
            <person name="Squares S."/>
            <person name="Taylor K."/>
            <person name="Warren T."/>
            <person name="Wietzorrek A."/>
            <person name="Woodward J.R."/>
            <person name="Barrell B.G."/>
            <person name="Parkhill J."/>
            <person name="Hopwood D.A."/>
        </authorList>
    </citation>
    <scope>NUCLEOTIDE SEQUENCE [LARGE SCALE GENOMIC DNA]</scope>
    <source>
        <strain>ATCC BAA-471 / A3(2) / M145</strain>
    </source>
</reference>
<keyword id="KW-0446">Lipid-binding</keyword>
<keyword id="KW-1185">Reference proteome</keyword>
<sequence>MSRHVAIVTDSTAYLPARAMERHGITAVPLTVVLGDRALEEGTEISTRSLAQALQKRRPVTTSRPNPELFAETYRRIAESGADGIVSLHLSAELSGTHDAAVVAAREAPVPVRVVDTGMIAMALGFCALAAAETAEAGGTVDEAVTAAEKRAAGTSAYFYVDTLDYLRRGGRIGAAQALFGSALAVKPLLQLEGGRIEPLEKVRTASKAIARLEEIAADRAGGAPVDIAVHHLAAPDRASALADRLRDRVPGLADLHVSEVGAVIGAHTGPGLLGVVVSSR</sequence>
<evidence type="ECO:0000250" key="1"/>
<evidence type="ECO:0000250" key="2">
    <source>
        <dbReference type="UniProtKB" id="Q9X1H9"/>
    </source>
</evidence>
<evidence type="ECO:0000255" key="3">
    <source>
        <dbReference type="PROSITE-ProRule" id="PRU00815"/>
    </source>
</evidence>
<proteinExistence type="inferred from homology"/>
<comment type="function">
    <text evidence="1">May bind long-chain fatty acids, such as palmitate, and may play a role in lipid transport or fatty acid metabolism.</text>
</comment>
<feature type="chain" id="PRO_0000209793" description="DegV domain-containing protein SCO2569">
    <location>
        <begin position="1"/>
        <end position="281"/>
    </location>
</feature>
<feature type="domain" description="DegV" evidence="3">
    <location>
        <begin position="5"/>
        <end position="280"/>
    </location>
</feature>
<feature type="binding site" evidence="2">
    <location>
        <position position="62"/>
    </location>
    <ligand>
        <name>hexadecanoate</name>
        <dbReference type="ChEBI" id="CHEBI:7896"/>
    </ligand>
</feature>
<feature type="binding site" evidence="2">
    <location>
        <position position="95"/>
    </location>
    <ligand>
        <name>hexadecanoate</name>
        <dbReference type="ChEBI" id="CHEBI:7896"/>
    </ligand>
</feature>
<dbReference type="EMBL" id="AL939113">
    <property type="protein sequence ID" value="CAB66247.1"/>
    <property type="molecule type" value="Genomic_DNA"/>
</dbReference>
<dbReference type="RefSeq" id="NP_626807.1">
    <property type="nucleotide sequence ID" value="NC_003888.3"/>
</dbReference>
<dbReference type="RefSeq" id="WP_003976234.1">
    <property type="nucleotide sequence ID" value="NZ_VNID01000001.1"/>
</dbReference>
<dbReference type="SMR" id="Q9RDL7"/>
<dbReference type="STRING" id="100226.gene:17760171"/>
<dbReference type="PaxDb" id="100226-SCO2569"/>
<dbReference type="KEGG" id="sco:SCO2569"/>
<dbReference type="PATRIC" id="fig|100226.15.peg.2614"/>
<dbReference type="eggNOG" id="COG1307">
    <property type="taxonomic scope" value="Bacteria"/>
</dbReference>
<dbReference type="HOGENOM" id="CLU_048251_0_1_11"/>
<dbReference type="InParanoid" id="Q9RDL7"/>
<dbReference type="OrthoDB" id="9760324at2"/>
<dbReference type="PhylomeDB" id="Q9RDL7"/>
<dbReference type="Proteomes" id="UP000001973">
    <property type="component" value="Chromosome"/>
</dbReference>
<dbReference type="GO" id="GO:0008289">
    <property type="term" value="F:lipid binding"/>
    <property type="evidence" value="ECO:0007669"/>
    <property type="project" value="UniProtKB-KW"/>
</dbReference>
<dbReference type="Gene3D" id="3.30.1180.10">
    <property type="match status" value="1"/>
</dbReference>
<dbReference type="Gene3D" id="3.40.50.10170">
    <property type="match status" value="1"/>
</dbReference>
<dbReference type="InterPro" id="IPR003797">
    <property type="entry name" value="DegV"/>
</dbReference>
<dbReference type="InterPro" id="IPR043168">
    <property type="entry name" value="DegV_C"/>
</dbReference>
<dbReference type="InterPro" id="IPR050270">
    <property type="entry name" value="DegV_domain_contain"/>
</dbReference>
<dbReference type="NCBIfam" id="TIGR00762">
    <property type="entry name" value="DegV"/>
    <property type="match status" value="1"/>
</dbReference>
<dbReference type="PANTHER" id="PTHR33434">
    <property type="entry name" value="DEGV DOMAIN-CONTAINING PROTEIN DR_1986-RELATED"/>
    <property type="match status" value="1"/>
</dbReference>
<dbReference type="PANTHER" id="PTHR33434:SF2">
    <property type="entry name" value="FATTY ACID-BINDING PROTEIN TM_1468"/>
    <property type="match status" value="1"/>
</dbReference>
<dbReference type="Pfam" id="PF02645">
    <property type="entry name" value="DegV"/>
    <property type="match status" value="1"/>
</dbReference>
<dbReference type="SUPFAM" id="SSF82549">
    <property type="entry name" value="DAK1/DegV-like"/>
    <property type="match status" value="1"/>
</dbReference>
<dbReference type="PROSITE" id="PS51482">
    <property type="entry name" value="DEGV"/>
    <property type="match status" value="1"/>
</dbReference>
<protein>
    <recommendedName>
        <fullName>DegV domain-containing protein SCO2569</fullName>
    </recommendedName>
</protein>
<gene>
    <name type="ordered locus">SCO2569</name>
    <name type="ORF">SCC123.07c</name>
</gene>